<keyword id="KW-0025">Alternative splicing</keyword>
<keyword id="KW-0966">Cell projection</keyword>
<keyword id="KW-0969">Cilium</keyword>
<keyword id="KW-0963">Cytoplasm</keyword>
<keyword id="KW-0206">Cytoskeleton</keyword>
<keyword id="KW-0282">Flagellum</keyword>
<keyword id="KW-1185">Reference proteome</keyword>
<keyword id="KW-0677">Repeat</keyword>
<keyword id="KW-0802">TPR repeat</keyword>
<name>CFA70_MACFA</name>
<proteinExistence type="evidence at transcript level"/>
<protein>
    <recommendedName>
        <fullName evidence="6">Cilia- and flagella-associated protein 70</fullName>
    </recommendedName>
</protein>
<evidence type="ECO:0000250" key="1">
    <source>
        <dbReference type="UniProtKB" id="D3YVL2"/>
    </source>
</evidence>
<evidence type="ECO:0000250" key="2">
    <source>
        <dbReference type="UniProtKB" id="Q5T0N1"/>
    </source>
</evidence>
<evidence type="ECO:0000256" key="3">
    <source>
        <dbReference type="SAM" id="MobiDB-lite"/>
    </source>
</evidence>
<evidence type="ECO:0000303" key="4">
    <source ref="2"/>
</evidence>
<evidence type="ECO:0000303" key="5">
    <source ref="3"/>
</evidence>
<evidence type="ECO:0000305" key="6"/>
<evidence type="ECO:0000312" key="7">
    <source>
        <dbReference type="EMBL" id="BAB63082.1"/>
    </source>
</evidence>
<evidence type="ECO:0000312" key="8">
    <source>
        <dbReference type="EMBL" id="BAB64444.1"/>
    </source>
</evidence>
<evidence type="ECO:0000312" key="9">
    <source>
        <dbReference type="EMBL" id="BAB69725.1"/>
    </source>
</evidence>
<evidence type="ECO:0000312" key="10">
    <source>
        <dbReference type="EMBL" id="BAE01369.1"/>
    </source>
</evidence>
<feature type="chain" id="PRO_0000291914" description="Cilia- and flagella-associated protein 70">
    <location>
        <begin position="1"/>
        <end position="1009"/>
    </location>
</feature>
<feature type="repeat" description="TPR 1">
    <location>
        <begin position="498"/>
        <end position="531"/>
    </location>
</feature>
<feature type="repeat" description="TPR 2">
    <location>
        <begin position="635"/>
        <end position="668"/>
    </location>
</feature>
<feature type="repeat" description="TPR 3">
    <location>
        <begin position="669"/>
        <end position="702"/>
    </location>
</feature>
<feature type="repeat" description="TPR 4">
    <location>
        <begin position="704"/>
        <end position="736"/>
    </location>
</feature>
<feature type="repeat" description="TPR 5">
    <location>
        <begin position="888"/>
        <end position="921"/>
    </location>
</feature>
<feature type="repeat" description="TPR 6">
    <location>
        <begin position="923"/>
        <end position="954"/>
    </location>
</feature>
<feature type="repeat" description="TPR 7">
    <location>
        <begin position="956"/>
        <end position="988"/>
    </location>
</feature>
<feature type="region of interest" description="Disordered" evidence="3">
    <location>
        <begin position="410"/>
        <end position="457"/>
    </location>
</feature>
<feature type="compositionally biased region" description="Basic and acidic residues" evidence="3">
    <location>
        <begin position="410"/>
        <end position="428"/>
    </location>
</feature>
<feature type="splice variant" id="VSP_026292" description="In isoform 3." evidence="4">
    <location>
        <begin position="216"/>
        <end position="863"/>
    </location>
</feature>
<feature type="splice variant" id="VSP_026293" description="In isoform 4." evidence="5">
    <original>ITRVPLVTVP</original>
    <variation>LFMFTLTWTV</variation>
    <location>
        <begin position="311"/>
        <end position="320"/>
    </location>
</feature>
<feature type="splice variant" id="VSP_026294" description="In isoform 4." evidence="5">
    <location>
        <begin position="321"/>
        <end position="1009"/>
    </location>
</feature>
<feature type="splice variant" id="VSP_026295" description="In isoform 2." evidence="4">
    <location>
        <begin position="551"/>
        <end position="974"/>
    </location>
</feature>
<feature type="splice variant" id="VSP_026296" description="In isoform 3." evidence="4">
    <original>KEIPTKKE</original>
    <variation>NGNHSEAK</variation>
    <location>
        <begin position="864"/>
        <end position="871"/>
    </location>
</feature>
<feature type="sequence conflict" description="In Ref. 2; BAB63082." evidence="6" ref="2">
    <original>T</original>
    <variation>A</variation>
    <location>
        <position position="14"/>
    </location>
</feature>
<feature type="sequence conflict" description="In Ref. 1; BAB69725." evidence="6" ref="1">
    <original>P</original>
    <variation>L</variation>
    <location>
        <position position="180"/>
    </location>
</feature>
<feature type="sequence conflict" description="In Ref. 2; BAB64444." evidence="6" ref="2">
    <original>D</original>
    <variation>E</variation>
    <location>
        <position position="384"/>
    </location>
</feature>
<reference key="1">
    <citation type="journal article" date="2002" name="BMC Genomics">
        <title>Cynomolgus monkey testicular cDNAs for discovery of novel human genes in the human genome sequence.</title>
        <authorList>
            <person name="Osada N."/>
            <person name="Hida M."/>
            <person name="Kusuda J."/>
            <person name="Tanuma R."/>
            <person name="Hirata M."/>
            <person name="Suto Y."/>
            <person name="Hirai M."/>
            <person name="Terao K."/>
            <person name="Sugano S."/>
            <person name="Hashimoto K."/>
        </authorList>
    </citation>
    <scope>NUCLEOTIDE SEQUENCE [LARGE SCALE MRNA] (ISOFORM 1)</scope>
    <source>
        <tissue>Testis</tissue>
    </source>
</reference>
<reference key="2">
    <citation type="submission" date="2001-09" db="EMBL/GenBank/DDBJ databases">
        <title>Isolation of novel full-length cDNA clones from macaque testis cDNA libraries.</title>
        <authorList>
            <person name="Hashimoto K."/>
            <person name="Osada N."/>
            <person name="Hida M."/>
            <person name="Kusuda J."/>
            <person name="Tanuma R."/>
            <person name="Hirai M."/>
            <person name="Terao K."/>
            <person name="Sugano S."/>
        </authorList>
    </citation>
    <scope>NUCLEOTIDE SEQUENCE [LARGE SCALE MRNA] (ISOFORMS 2 AND 3)</scope>
    <source>
        <tissue>Testis</tissue>
    </source>
</reference>
<reference key="3">
    <citation type="submission" date="2005-06" db="EMBL/GenBank/DDBJ databases">
        <title>DNA sequences of macaque genes expressed in brain or testis and its evolutionary implications.</title>
        <authorList>
            <consortium name="International consortium for macaque cDNA sequencing and analysis"/>
        </authorList>
    </citation>
    <scope>NUCLEOTIDE SEQUENCE [LARGE SCALE MRNA] (ISOFORM 4)</scope>
    <source>
        <tissue>Testis</tissue>
    </source>
</reference>
<gene>
    <name evidence="6" type="primary">CFAP70</name>
    <name evidence="8" type="ORF">QtsA-14176</name>
    <name evidence="7" type="ORF">QtsA-14782</name>
    <name evidence="9" type="ORF">QtsA-18431</name>
    <name evidence="10" type="ORF">QtsA-18615</name>
</gene>
<accession>Q95LN2</accession>
<accession>Q4R6A6</accession>
<accession>Q95JP4</accession>
<accession>Q95LZ0</accession>
<comment type="function">
    <text evidence="1">Axoneme-binding protein that plays a role in the regulation of ciliary motility and cilium length.</text>
</comment>
<comment type="subcellular location">
    <subcellularLocation>
        <location evidence="2">Cell projection</location>
        <location evidence="2">Cilium</location>
        <location evidence="2">Flagellum</location>
    </subcellularLocation>
    <subcellularLocation>
        <location evidence="2">Cytoplasm</location>
        <location evidence="2">Cytoskeleton</location>
        <location evidence="2">Flagellum basal body</location>
    </subcellularLocation>
    <subcellularLocation>
        <location evidence="1">Cell projection</location>
        <location evidence="1">Cilium</location>
    </subcellularLocation>
    <subcellularLocation>
        <location evidence="1">Cytoplasm</location>
        <location evidence="1">Cytoskeleton</location>
        <location evidence="1">Cilium axoneme</location>
    </subcellularLocation>
    <text evidence="2">Present all along the flagellum, with a marked signal at the base of the flagellum.</text>
</comment>
<comment type="alternative products">
    <event type="alternative splicing"/>
    <isoform>
        <id>Q95LN2-1</id>
        <name>1</name>
        <sequence type="displayed"/>
    </isoform>
    <isoform>
        <id>Q95LN2-2</id>
        <name>2</name>
        <sequence type="described" ref="VSP_026295"/>
    </isoform>
    <isoform>
        <id>Q95LN2-3</id>
        <name>3</name>
        <sequence type="described" ref="VSP_026292 VSP_026296"/>
    </isoform>
    <isoform>
        <id>Q95LN2-4</id>
        <name>4</name>
        <sequence type="described" ref="VSP_026293 VSP_026294"/>
    </isoform>
</comment>
<comment type="domain">
    <text evidence="1">The conserved TPR domains are dispensable for ciliary targeting. The N-terminal half is important for cilary localization and/or binding to the axoneme.</text>
</comment>
<comment type="similarity">
    <text evidence="6">Belongs to the CFAP70 family.</text>
</comment>
<organism>
    <name type="scientific">Macaca fascicularis</name>
    <name type="common">Crab-eating macaque</name>
    <name type="synonym">Cynomolgus monkey</name>
    <dbReference type="NCBI Taxonomy" id="9541"/>
    <lineage>
        <taxon>Eukaryota</taxon>
        <taxon>Metazoa</taxon>
        <taxon>Chordata</taxon>
        <taxon>Craniata</taxon>
        <taxon>Vertebrata</taxon>
        <taxon>Euteleostomi</taxon>
        <taxon>Mammalia</taxon>
        <taxon>Eutheria</taxon>
        <taxon>Euarchontoglires</taxon>
        <taxon>Primates</taxon>
        <taxon>Haplorrhini</taxon>
        <taxon>Catarrhini</taxon>
        <taxon>Cercopithecidae</taxon>
        <taxon>Cercopithecinae</taxon>
        <taxon>Macaca</taxon>
    </lineage>
</organism>
<dbReference type="EMBL" id="AB072756">
    <property type="protein sequence ID" value="BAB69725.1"/>
    <property type="molecule type" value="mRNA"/>
</dbReference>
<dbReference type="EMBL" id="AB070137">
    <property type="protein sequence ID" value="BAB63082.1"/>
    <property type="molecule type" value="mRNA"/>
</dbReference>
<dbReference type="EMBL" id="AB071051">
    <property type="protein sequence ID" value="BAB64444.1"/>
    <property type="molecule type" value="mRNA"/>
</dbReference>
<dbReference type="EMBL" id="AB169281">
    <property type="protein sequence ID" value="BAE01369.1"/>
    <property type="molecule type" value="mRNA"/>
</dbReference>
<dbReference type="SMR" id="Q95LN2"/>
<dbReference type="STRING" id="9541.ENSMFAP00000030942"/>
<dbReference type="Proteomes" id="UP000233100">
    <property type="component" value="Unplaced"/>
</dbReference>
<dbReference type="GO" id="GO:0005930">
    <property type="term" value="C:axoneme"/>
    <property type="evidence" value="ECO:0000250"/>
    <property type="project" value="UniProtKB"/>
</dbReference>
<dbReference type="GO" id="GO:0070062">
    <property type="term" value="C:extracellular exosome"/>
    <property type="evidence" value="ECO:0007669"/>
    <property type="project" value="TreeGrafter"/>
</dbReference>
<dbReference type="GO" id="GO:0031514">
    <property type="term" value="C:motile cilium"/>
    <property type="evidence" value="ECO:0000250"/>
    <property type="project" value="UniProtKB"/>
</dbReference>
<dbReference type="GO" id="GO:0036157">
    <property type="term" value="C:outer dynein arm"/>
    <property type="evidence" value="ECO:0000250"/>
    <property type="project" value="UniProtKB"/>
</dbReference>
<dbReference type="GO" id="GO:0036126">
    <property type="term" value="C:sperm flagellum"/>
    <property type="evidence" value="ECO:0000250"/>
    <property type="project" value="UniProtKB"/>
</dbReference>
<dbReference type="GO" id="GO:0060271">
    <property type="term" value="P:cilium assembly"/>
    <property type="evidence" value="ECO:0000250"/>
    <property type="project" value="UniProtKB"/>
</dbReference>
<dbReference type="GO" id="GO:0003341">
    <property type="term" value="P:cilium movement"/>
    <property type="evidence" value="ECO:0000250"/>
    <property type="project" value="UniProtKB"/>
</dbReference>
<dbReference type="FunFam" id="1.25.40.10:FF:000717">
    <property type="entry name" value="Cilia- and flagella-associated protein 70"/>
    <property type="match status" value="1"/>
</dbReference>
<dbReference type="FunFam" id="1.25.40.10:FF:000489">
    <property type="entry name" value="cilia- and flagella-associated protein 70 isoform X2"/>
    <property type="match status" value="1"/>
</dbReference>
<dbReference type="Gene3D" id="1.25.40.10">
    <property type="entry name" value="Tetratricopeptide repeat domain"/>
    <property type="match status" value="2"/>
</dbReference>
<dbReference type="InterPro" id="IPR052628">
    <property type="entry name" value="CFAP70"/>
</dbReference>
<dbReference type="InterPro" id="IPR011990">
    <property type="entry name" value="TPR-like_helical_dom_sf"/>
</dbReference>
<dbReference type="InterPro" id="IPR019734">
    <property type="entry name" value="TPR_rpt"/>
</dbReference>
<dbReference type="PANTHER" id="PTHR44314">
    <property type="entry name" value="CILIA- AND FLAGELLA-ASSOCIATED PROTEIN 70"/>
    <property type="match status" value="1"/>
</dbReference>
<dbReference type="PANTHER" id="PTHR44314:SF1">
    <property type="entry name" value="CILIA- AND FLAGELLA-ASSOCIATED PROTEIN 70"/>
    <property type="match status" value="1"/>
</dbReference>
<dbReference type="Pfam" id="PF13181">
    <property type="entry name" value="TPR_8"/>
    <property type="match status" value="1"/>
</dbReference>
<dbReference type="SMART" id="SM00028">
    <property type="entry name" value="TPR"/>
    <property type="match status" value="7"/>
</dbReference>
<dbReference type="SUPFAM" id="SSF48452">
    <property type="entry name" value="TPR-like"/>
    <property type="match status" value="1"/>
</dbReference>
<dbReference type="PROSITE" id="PS50005">
    <property type="entry name" value="TPR"/>
    <property type="match status" value="5"/>
</dbReference>
<dbReference type="PROSITE" id="PS50293">
    <property type="entry name" value="TPR_REGION"/>
    <property type="match status" value="2"/>
</dbReference>
<sequence>MEQVPSTGRLVQITVTEGYDLKGFKGDTPVTFIRAEFNQVVLGDSAKITVSPEGSAKYNFTSSFEFNPEGGITLDDLAHKPVFLTVTEVLPKEKKQKEEKTLILGQAVVDLLPLLEGQSSFQTTVPLHPVQGSPLETPRSSAKQCSLEVKVLVAEPLLTTAQISGGNLLKVTLEAAYSVPESFIPTGPGQNYMVGLQVPSLGEKDYPILFKNGTLKLGGEREPVPRPKKWPIANILAPGANNIPDAFIVGGPYEEEEGELNHPEDSEFRNQAECIKKRIIWDLESRCYLDPSAVVSFQKRIADCRLWPVEITRVPLVTVPKGKAGKTEKTDEEGQLSFHGVAYVNMVPLLYPGVKRIRGAFHVYPYLDSVVHEKTKCLLSLFRDIGHHLIHNNKIGGINSLLSKQAVSKNLKEDKPVKEKDIDGRPRPGDVQAPSIKSQSSDTPLEGEPPLSHNPEGQQYVEAGTYIVLEIQLDKALVPKRMPEELARRVKEMIPPRPPLTRRTGGAQKAVSDYHTQIKNISRAILDEYYRMFGKQVAKLESDMDSETLEEQKCQLSYELNCSGKYFAFKEQLKHAVVKIVREKYLKTTSFESQEELQTFISELYVFLVDQMHVALNQTMPDDVQGTIATIFTSSEQLRLFAFEAEVNENFEMAAAYYKERLVREPQNLDHWLDYGVFCLLTEDNIKAQECFRKALSLNQSHIHSLLLCGVLAVLLENYEQAEIFFEDATCLEPTNVVAWTLLGLYYEIQNNDIRMEMAFHEASKQLQAQMLQAQVTKQKSAGVVEDVEERGKRESSLGPWGITNGSATAIKVEAPAGPGAALSILDKFLEESSKLQSDSQEPILTTQTWDPSINQKPSNTFIKEIPTKKEACYERTISFVVDASEMHFIFLRLGLIYLEEKEYEKAKKTYMQACKRSPSCLTWLGLGIACYRLEELTEAEDALSEANALNNYNAEVWAYLALVCLKVGRQLEAEQAYKYMIKLKLKDEALLAEIHTLQETVGFGNPSF</sequence>